<proteinExistence type="evidence at transcript level"/>
<organism>
    <name type="scientific">Echinococcus granulosus</name>
    <name type="common">Hydatid tapeworm</name>
    <dbReference type="NCBI Taxonomy" id="6210"/>
    <lineage>
        <taxon>Eukaryota</taxon>
        <taxon>Metazoa</taxon>
        <taxon>Spiralia</taxon>
        <taxon>Lophotrochozoa</taxon>
        <taxon>Platyhelminthes</taxon>
        <taxon>Cestoda</taxon>
        <taxon>Eucestoda</taxon>
        <taxon>Cyclophyllidea</taxon>
        <taxon>Taeniidae</taxon>
        <taxon>Echinococcus</taxon>
        <taxon>Echinococcus granulosus group</taxon>
    </lineage>
</organism>
<name>PPIA_ECHGR</name>
<feature type="chain" id="PRO_0000064124" description="Peptidyl-prolyl cis-trans isomerase">
    <location>
        <begin position="1"/>
        <end position="162"/>
    </location>
</feature>
<feature type="domain" description="PPIase cyclophilin-type" evidence="1">
    <location>
        <begin position="6"/>
        <end position="161"/>
    </location>
</feature>
<comment type="function">
    <text evidence="2">PPIases accelerate the folding of proteins. It catalyzes the cis-trans isomerization of proline imidic peptide bonds in oligopeptides.</text>
</comment>
<comment type="catalytic activity">
    <reaction>
        <text>[protein]-peptidylproline (omega=180) = [protein]-peptidylproline (omega=0)</text>
        <dbReference type="Rhea" id="RHEA:16237"/>
        <dbReference type="Rhea" id="RHEA-COMP:10747"/>
        <dbReference type="Rhea" id="RHEA-COMP:10748"/>
        <dbReference type="ChEBI" id="CHEBI:83833"/>
        <dbReference type="ChEBI" id="CHEBI:83834"/>
        <dbReference type="EC" id="5.2.1.8"/>
    </reaction>
</comment>
<comment type="activity regulation">
    <text>Binds cyclosporin A (CsA). CsA mediates some of its effects via an inhibitory action on PPIase.</text>
</comment>
<comment type="subcellular location">
    <subcellularLocation>
        <location>Cytoplasm</location>
    </subcellularLocation>
</comment>
<comment type="developmental stage">
    <text evidence="2">Expressed constitutively in all life-cycle stages examined.</text>
</comment>
<comment type="similarity">
    <text evidence="3">Belongs to the cyclophilin-type PPIase family. PPIase A subfamily.</text>
</comment>
<reference key="1">
    <citation type="journal article" date="2002" name="Parasitology">
        <title>Anti-parasitic effect of cyclosporin A on Echinococcus granulosus and characterization of the associated cyclophilin protein.</title>
        <authorList>
            <person name="Colebrook A.L."/>
            <person name="Jenkins D.D."/>
            <person name="Lightowlers M.W."/>
        </authorList>
    </citation>
    <scope>NUCLEOTIDE SEQUENCE [GENOMIC DNA]</scope>
    <scope>FUNCTION</scope>
    <scope>DEVELOPMENTAL STAGE</scope>
</reference>
<reference key="2">
    <citation type="journal article" date="1989" name="Mol. Biochem. Parasitol.">
        <title>Amino acid sequence homology between cyclophilin and a cDNA-cloned antigen of Echinococcus granulosus.</title>
        <authorList>
            <person name="Lightowlers M.W."/>
            <person name="Haralambous A."/>
            <person name="Rickard M.D."/>
        </authorList>
    </citation>
    <scope>NUCLEOTIDE SEQUENCE [MRNA] OF 2-162</scope>
</reference>
<evidence type="ECO:0000255" key="1">
    <source>
        <dbReference type="PROSITE-ProRule" id="PRU00156"/>
    </source>
</evidence>
<evidence type="ECO:0000269" key="2">
    <source>
    </source>
</evidence>
<evidence type="ECO:0000305" key="3"/>
<protein>
    <recommendedName>
        <fullName>Peptidyl-prolyl cis-trans isomerase</fullName>
        <shortName>PPIase</shortName>
        <ecNumber>5.2.1.8</ecNumber>
    </recommendedName>
    <alternativeName>
        <fullName>Cyclophilin</fullName>
    </alternativeName>
    <alternativeName>
        <fullName>Cyclosporin A-binding protein</fullName>
    </alternativeName>
    <alternativeName>
        <fullName>EGCyP-1</fullName>
    </alternativeName>
    <alternativeName>
        <fullName>Rotamase</fullName>
    </alternativeName>
</protein>
<sequence length="162" mass="17355">MGVKCFFDISIGGKPAGRIVFALFDDVPKTVENFRALCTGEKGFGYKGSKFHRIIPGFMCQGGDFTAGNGTGGKSIYGSKFEDENFNHKHSKPMMLSMANAGKNTNGSQFFITTAVTSWLDGKHVVFGEVESGEDVVKDMEAVGSSSGKTSQEVLITDCGQL</sequence>
<accession>P14088</accession>
<accession>Q8ITN4</accession>
<keyword id="KW-0963">Cytoplasm</keyword>
<keyword id="KW-0413">Isomerase</keyword>
<keyword id="KW-0697">Rotamase</keyword>
<gene>
    <name type="primary">CYP-1</name>
</gene>
<dbReference type="EC" id="5.2.1.8"/>
<dbReference type="EMBL" id="AF431734">
    <property type="protein sequence ID" value="AAN63589.1"/>
    <property type="molecule type" value="Genomic_DNA"/>
</dbReference>
<dbReference type="EMBL" id="AF430707">
    <property type="protein sequence ID" value="AAN62875.1"/>
    <property type="molecule type" value="mRNA"/>
</dbReference>
<dbReference type="PIR" id="A45000">
    <property type="entry name" value="A45000"/>
</dbReference>
<dbReference type="SMR" id="P14088"/>
<dbReference type="EnsemblMetazoa" id="XM_024492552.1">
    <property type="protein sequence ID" value="XP_024352953.1"/>
    <property type="gene ID" value="GeneID_36339018"/>
</dbReference>
<dbReference type="WBParaSite" id="EgrG_000920600">
    <property type="protein sequence ID" value="EgrG_000920600"/>
    <property type="gene ID" value="EgrG_000920600"/>
</dbReference>
<dbReference type="OMA" id="ENFKRTH"/>
<dbReference type="OrthoDB" id="193499at2759"/>
<dbReference type="Proteomes" id="UP000492820">
    <property type="component" value="Unassembled WGS sequence"/>
</dbReference>
<dbReference type="GO" id="GO:0005737">
    <property type="term" value="C:cytoplasm"/>
    <property type="evidence" value="ECO:0007669"/>
    <property type="project" value="UniProtKB-SubCell"/>
</dbReference>
<dbReference type="GO" id="GO:0016018">
    <property type="term" value="F:cyclosporin A binding"/>
    <property type="evidence" value="ECO:0007669"/>
    <property type="project" value="TreeGrafter"/>
</dbReference>
<dbReference type="GO" id="GO:0003755">
    <property type="term" value="F:peptidyl-prolyl cis-trans isomerase activity"/>
    <property type="evidence" value="ECO:0007669"/>
    <property type="project" value="UniProtKB-KW"/>
</dbReference>
<dbReference type="GO" id="GO:0006457">
    <property type="term" value="P:protein folding"/>
    <property type="evidence" value="ECO:0007669"/>
    <property type="project" value="InterPro"/>
</dbReference>
<dbReference type="CDD" id="cd01926">
    <property type="entry name" value="cyclophilin_ABH_like"/>
    <property type="match status" value="1"/>
</dbReference>
<dbReference type="FunFam" id="2.40.100.10:FF:000013">
    <property type="entry name" value="Peptidyl-prolyl cis-trans isomerase"/>
    <property type="match status" value="1"/>
</dbReference>
<dbReference type="Gene3D" id="2.40.100.10">
    <property type="entry name" value="Cyclophilin-like"/>
    <property type="match status" value="1"/>
</dbReference>
<dbReference type="InterPro" id="IPR029000">
    <property type="entry name" value="Cyclophilin-like_dom_sf"/>
</dbReference>
<dbReference type="InterPro" id="IPR024936">
    <property type="entry name" value="Cyclophilin-type_PPIase"/>
</dbReference>
<dbReference type="InterPro" id="IPR020892">
    <property type="entry name" value="Cyclophilin-type_PPIase_CS"/>
</dbReference>
<dbReference type="InterPro" id="IPR002130">
    <property type="entry name" value="Cyclophilin-type_PPIase_dom"/>
</dbReference>
<dbReference type="PANTHER" id="PTHR11071">
    <property type="entry name" value="PEPTIDYL-PROLYL CIS-TRANS ISOMERASE"/>
    <property type="match status" value="1"/>
</dbReference>
<dbReference type="PANTHER" id="PTHR11071:SF561">
    <property type="entry name" value="PEPTIDYL-PROLYL CIS-TRANS ISOMERASE D-RELATED"/>
    <property type="match status" value="1"/>
</dbReference>
<dbReference type="Pfam" id="PF00160">
    <property type="entry name" value="Pro_isomerase"/>
    <property type="match status" value="1"/>
</dbReference>
<dbReference type="PIRSF" id="PIRSF001467">
    <property type="entry name" value="Peptidylpro_ismrse"/>
    <property type="match status" value="1"/>
</dbReference>
<dbReference type="PRINTS" id="PR00153">
    <property type="entry name" value="CSAPPISMRASE"/>
</dbReference>
<dbReference type="SUPFAM" id="SSF50891">
    <property type="entry name" value="Cyclophilin-like"/>
    <property type="match status" value="1"/>
</dbReference>
<dbReference type="PROSITE" id="PS00170">
    <property type="entry name" value="CSA_PPIASE_1"/>
    <property type="match status" value="1"/>
</dbReference>
<dbReference type="PROSITE" id="PS50072">
    <property type="entry name" value="CSA_PPIASE_2"/>
    <property type="match status" value="1"/>
</dbReference>